<reference key="1">
    <citation type="journal article" date="2009" name="PLoS Genet.">
        <title>Organised genome dynamics in the Escherichia coli species results in highly diverse adaptive paths.</title>
        <authorList>
            <person name="Touchon M."/>
            <person name="Hoede C."/>
            <person name="Tenaillon O."/>
            <person name="Barbe V."/>
            <person name="Baeriswyl S."/>
            <person name="Bidet P."/>
            <person name="Bingen E."/>
            <person name="Bonacorsi S."/>
            <person name="Bouchier C."/>
            <person name="Bouvet O."/>
            <person name="Calteau A."/>
            <person name="Chiapello H."/>
            <person name="Clermont O."/>
            <person name="Cruveiller S."/>
            <person name="Danchin A."/>
            <person name="Diard M."/>
            <person name="Dossat C."/>
            <person name="Karoui M.E."/>
            <person name="Frapy E."/>
            <person name="Garry L."/>
            <person name="Ghigo J.M."/>
            <person name="Gilles A.M."/>
            <person name="Johnson J."/>
            <person name="Le Bouguenec C."/>
            <person name="Lescat M."/>
            <person name="Mangenot S."/>
            <person name="Martinez-Jehanne V."/>
            <person name="Matic I."/>
            <person name="Nassif X."/>
            <person name="Oztas S."/>
            <person name="Petit M.A."/>
            <person name="Pichon C."/>
            <person name="Rouy Z."/>
            <person name="Ruf C.S."/>
            <person name="Schneider D."/>
            <person name="Tourret J."/>
            <person name="Vacherie B."/>
            <person name="Vallenet D."/>
            <person name="Medigue C."/>
            <person name="Rocha E.P.C."/>
            <person name="Denamur E."/>
        </authorList>
    </citation>
    <scope>NUCLEOTIDE SEQUENCE [LARGE SCALE GENOMIC DNA]</scope>
    <source>
        <strain>IAI39 / ExPEC</strain>
    </source>
</reference>
<proteinExistence type="inferred from homology"/>
<organism>
    <name type="scientific">Escherichia coli O7:K1 (strain IAI39 / ExPEC)</name>
    <dbReference type="NCBI Taxonomy" id="585057"/>
    <lineage>
        <taxon>Bacteria</taxon>
        <taxon>Pseudomonadati</taxon>
        <taxon>Pseudomonadota</taxon>
        <taxon>Gammaproteobacteria</taxon>
        <taxon>Enterobacterales</taxon>
        <taxon>Enterobacteriaceae</taxon>
        <taxon>Escherichia</taxon>
    </lineage>
</organism>
<name>PDXH_ECO7I</name>
<dbReference type="EC" id="1.4.3.5" evidence="1"/>
<dbReference type="EMBL" id="CU928164">
    <property type="protein sequence ID" value="CAR17550.1"/>
    <property type="molecule type" value="Genomic_DNA"/>
</dbReference>
<dbReference type="RefSeq" id="WP_001282325.1">
    <property type="nucleotide sequence ID" value="NC_011750.1"/>
</dbReference>
<dbReference type="RefSeq" id="YP_002407422.1">
    <property type="nucleotide sequence ID" value="NC_011750.1"/>
</dbReference>
<dbReference type="SMR" id="B7NTZ4"/>
<dbReference type="STRING" id="585057.ECIAI39_1417"/>
<dbReference type="KEGG" id="ect:ECIAI39_1417"/>
<dbReference type="PATRIC" id="fig|585057.6.peg.1484"/>
<dbReference type="HOGENOM" id="CLU_032263_2_2_6"/>
<dbReference type="UniPathway" id="UPA01068">
    <property type="reaction ID" value="UER00304"/>
</dbReference>
<dbReference type="UniPathway" id="UPA01068">
    <property type="reaction ID" value="UER00305"/>
</dbReference>
<dbReference type="Proteomes" id="UP000000749">
    <property type="component" value="Chromosome"/>
</dbReference>
<dbReference type="GO" id="GO:0010181">
    <property type="term" value="F:FMN binding"/>
    <property type="evidence" value="ECO:0007669"/>
    <property type="project" value="UniProtKB-UniRule"/>
</dbReference>
<dbReference type="GO" id="GO:0004733">
    <property type="term" value="F:pyridoxamine phosphate oxidase activity"/>
    <property type="evidence" value="ECO:0007669"/>
    <property type="project" value="UniProtKB-UniRule"/>
</dbReference>
<dbReference type="GO" id="GO:0008615">
    <property type="term" value="P:pyridoxine biosynthetic process"/>
    <property type="evidence" value="ECO:0007669"/>
    <property type="project" value="UniProtKB-KW"/>
</dbReference>
<dbReference type="FunFam" id="2.30.110.10:FF:000001">
    <property type="entry name" value="Pyridoxine/pyridoxamine 5'-phosphate oxidase"/>
    <property type="match status" value="1"/>
</dbReference>
<dbReference type="Gene3D" id="2.30.110.10">
    <property type="entry name" value="Electron Transport, Fmn-binding Protein, Chain A"/>
    <property type="match status" value="1"/>
</dbReference>
<dbReference type="HAMAP" id="MF_01629">
    <property type="entry name" value="PdxH"/>
    <property type="match status" value="1"/>
</dbReference>
<dbReference type="InterPro" id="IPR000659">
    <property type="entry name" value="Pyridox_Oxase"/>
</dbReference>
<dbReference type="InterPro" id="IPR019740">
    <property type="entry name" value="Pyridox_Oxase_CS"/>
</dbReference>
<dbReference type="InterPro" id="IPR011576">
    <property type="entry name" value="Pyridox_Oxase_N"/>
</dbReference>
<dbReference type="InterPro" id="IPR019576">
    <property type="entry name" value="Pyridoxamine_oxidase_dimer_C"/>
</dbReference>
<dbReference type="InterPro" id="IPR012349">
    <property type="entry name" value="Split_barrel_FMN-bd"/>
</dbReference>
<dbReference type="NCBIfam" id="TIGR00558">
    <property type="entry name" value="pdxH"/>
    <property type="match status" value="1"/>
</dbReference>
<dbReference type="NCBIfam" id="NF004231">
    <property type="entry name" value="PRK05679.1"/>
    <property type="match status" value="1"/>
</dbReference>
<dbReference type="PANTHER" id="PTHR10851:SF0">
    <property type="entry name" value="PYRIDOXINE-5'-PHOSPHATE OXIDASE"/>
    <property type="match status" value="1"/>
</dbReference>
<dbReference type="PANTHER" id="PTHR10851">
    <property type="entry name" value="PYRIDOXINE-5-PHOSPHATE OXIDASE"/>
    <property type="match status" value="1"/>
</dbReference>
<dbReference type="Pfam" id="PF10590">
    <property type="entry name" value="PNP_phzG_C"/>
    <property type="match status" value="1"/>
</dbReference>
<dbReference type="Pfam" id="PF01243">
    <property type="entry name" value="PNPOx_N"/>
    <property type="match status" value="1"/>
</dbReference>
<dbReference type="PIRSF" id="PIRSF000190">
    <property type="entry name" value="Pyd_amn-ph_oxd"/>
    <property type="match status" value="1"/>
</dbReference>
<dbReference type="SUPFAM" id="SSF50475">
    <property type="entry name" value="FMN-binding split barrel"/>
    <property type="match status" value="1"/>
</dbReference>
<dbReference type="PROSITE" id="PS01064">
    <property type="entry name" value="PYRIDOX_OXIDASE"/>
    <property type="match status" value="1"/>
</dbReference>
<accession>B7NTZ4</accession>
<gene>
    <name evidence="1" type="primary">pdxH</name>
    <name type="ordered locus">ECIAI39_1417</name>
</gene>
<evidence type="ECO:0000255" key="1">
    <source>
        <dbReference type="HAMAP-Rule" id="MF_01629"/>
    </source>
</evidence>
<feature type="chain" id="PRO_1000186308" description="Pyridoxine/pyridoxamine 5'-phosphate oxidase">
    <location>
        <begin position="1"/>
        <end position="218"/>
    </location>
</feature>
<feature type="binding site" evidence="1">
    <location>
        <begin position="14"/>
        <end position="17"/>
    </location>
    <ligand>
        <name>substrate</name>
    </ligand>
</feature>
<feature type="binding site" evidence="1">
    <location>
        <begin position="67"/>
        <end position="72"/>
    </location>
    <ligand>
        <name>FMN</name>
        <dbReference type="ChEBI" id="CHEBI:58210"/>
    </ligand>
</feature>
<feature type="binding site" evidence="1">
    <location>
        <position position="72"/>
    </location>
    <ligand>
        <name>substrate</name>
    </ligand>
</feature>
<feature type="binding site" evidence="1">
    <location>
        <begin position="82"/>
        <end position="83"/>
    </location>
    <ligand>
        <name>FMN</name>
        <dbReference type="ChEBI" id="CHEBI:58210"/>
    </ligand>
</feature>
<feature type="binding site" evidence="1">
    <location>
        <position position="88"/>
    </location>
    <ligand>
        <name>FMN</name>
        <dbReference type="ChEBI" id="CHEBI:58210"/>
    </ligand>
</feature>
<feature type="binding site" evidence="1">
    <location>
        <position position="89"/>
    </location>
    <ligand>
        <name>FMN</name>
        <dbReference type="ChEBI" id="CHEBI:58210"/>
    </ligand>
</feature>
<feature type="binding site" evidence="1">
    <location>
        <position position="111"/>
    </location>
    <ligand>
        <name>FMN</name>
        <dbReference type="ChEBI" id="CHEBI:58210"/>
    </ligand>
</feature>
<feature type="binding site" evidence="1">
    <location>
        <position position="129"/>
    </location>
    <ligand>
        <name>substrate</name>
    </ligand>
</feature>
<feature type="binding site" evidence="1">
    <location>
        <position position="133"/>
    </location>
    <ligand>
        <name>substrate</name>
    </ligand>
</feature>
<feature type="binding site" evidence="1">
    <location>
        <position position="137"/>
    </location>
    <ligand>
        <name>substrate</name>
    </ligand>
</feature>
<feature type="binding site" evidence="1">
    <location>
        <begin position="146"/>
        <end position="147"/>
    </location>
    <ligand>
        <name>FMN</name>
        <dbReference type="ChEBI" id="CHEBI:58210"/>
    </ligand>
</feature>
<feature type="binding site" evidence="1">
    <location>
        <position position="191"/>
    </location>
    <ligand>
        <name>FMN</name>
        <dbReference type="ChEBI" id="CHEBI:58210"/>
    </ligand>
</feature>
<feature type="binding site" evidence="1">
    <location>
        <begin position="197"/>
        <end position="199"/>
    </location>
    <ligand>
        <name>substrate</name>
    </ligand>
</feature>
<feature type="binding site" evidence="1">
    <location>
        <position position="201"/>
    </location>
    <ligand>
        <name>FMN</name>
        <dbReference type="ChEBI" id="CHEBI:58210"/>
    </ligand>
</feature>
<sequence>MSDNDELQQIAHLRREYTKGGLRRRDLPAEPLTLFERWLSQACDAKLADPTAMVVATVDEHGQPYQRIVLLKHYDEKGMVFYTNLGSRKAHQIENNPRVSLLFPWHTLERQVMVIGKAERLSTLEVMKYFHSRPRDSQIGAWVSKQSSRISARGILESKFLELKQKFQQGEVPLPSFWGGFRVSLEQIEFWQGGEHRLHDRFLYQRENDAWKIDRLAP</sequence>
<protein>
    <recommendedName>
        <fullName evidence="1">Pyridoxine/pyridoxamine 5'-phosphate oxidase</fullName>
        <ecNumber evidence="1">1.4.3.5</ecNumber>
    </recommendedName>
    <alternativeName>
        <fullName evidence="1">PNP/PMP oxidase</fullName>
        <shortName evidence="1">PNPOx</shortName>
    </alternativeName>
    <alternativeName>
        <fullName evidence="1">Pyridoxal 5'-phosphate synthase</fullName>
    </alternativeName>
</protein>
<keyword id="KW-0285">Flavoprotein</keyword>
<keyword id="KW-0288">FMN</keyword>
<keyword id="KW-0560">Oxidoreductase</keyword>
<keyword id="KW-0664">Pyridoxine biosynthesis</keyword>
<comment type="function">
    <text evidence="1">Catalyzes the oxidation of either pyridoxine 5'-phosphate (PNP) or pyridoxamine 5'-phosphate (PMP) into pyridoxal 5'-phosphate (PLP).</text>
</comment>
<comment type="catalytic activity">
    <reaction evidence="1">
        <text>pyridoxamine 5'-phosphate + O2 + H2O = pyridoxal 5'-phosphate + H2O2 + NH4(+)</text>
        <dbReference type="Rhea" id="RHEA:15817"/>
        <dbReference type="ChEBI" id="CHEBI:15377"/>
        <dbReference type="ChEBI" id="CHEBI:15379"/>
        <dbReference type="ChEBI" id="CHEBI:16240"/>
        <dbReference type="ChEBI" id="CHEBI:28938"/>
        <dbReference type="ChEBI" id="CHEBI:58451"/>
        <dbReference type="ChEBI" id="CHEBI:597326"/>
        <dbReference type="EC" id="1.4.3.5"/>
    </reaction>
</comment>
<comment type="catalytic activity">
    <reaction evidence="1">
        <text>pyridoxine 5'-phosphate + O2 = pyridoxal 5'-phosphate + H2O2</text>
        <dbReference type="Rhea" id="RHEA:15149"/>
        <dbReference type="ChEBI" id="CHEBI:15379"/>
        <dbReference type="ChEBI" id="CHEBI:16240"/>
        <dbReference type="ChEBI" id="CHEBI:58589"/>
        <dbReference type="ChEBI" id="CHEBI:597326"/>
        <dbReference type="EC" id="1.4.3.5"/>
    </reaction>
</comment>
<comment type="cofactor">
    <cofactor evidence="1">
        <name>FMN</name>
        <dbReference type="ChEBI" id="CHEBI:58210"/>
    </cofactor>
    <text evidence="1">Binds 1 FMN per subunit.</text>
</comment>
<comment type="pathway">
    <text evidence="1">Cofactor metabolism; pyridoxal 5'-phosphate salvage; pyridoxal 5'-phosphate from pyridoxamine 5'-phosphate: step 1/1.</text>
</comment>
<comment type="pathway">
    <text evidence="1">Cofactor metabolism; pyridoxal 5'-phosphate salvage; pyridoxal 5'-phosphate from pyridoxine 5'-phosphate: step 1/1.</text>
</comment>
<comment type="subunit">
    <text evidence="1">Homodimer.</text>
</comment>
<comment type="similarity">
    <text evidence="1">Belongs to the pyridoxamine 5'-phosphate oxidase family.</text>
</comment>